<reference key="1">
    <citation type="journal article" date="2009" name="PLoS ONE">
        <title>Genome degradation in Brucella ovis corresponds with narrowing of its host range and tissue tropism.</title>
        <authorList>
            <person name="Tsolis R.M."/>
            <person name="Seshadri R."/>
            <person name="Santos R.L."/>
            <person name="Sangari F.J."/>
            <person name="Lobo J.M."/>
            <person name="de Jong M.F."/>
            <person name="Ren Q."/>
            <person name="Myers G."/>
            <person name="Brinkac L.M."/>
            <person name="Nelson W.C."/>
            <person name="Deboy R.T."/>
            <person name="Angiuoli S."/>
            <person name="Khouri H."/>
            <person name="Dimitrov G."/>
            <person name="Robinson J.R."/>
            <person name="Mulligan S."/>
            <person name="Walker R.L."/>
            <person name="Elzer P.E."/>
            <person name="Hassan K.A."/>
            <person name="Paulsen I.T."/>
        </authorList>
    </citation>
    <scope>NUCLEOTIDE SEQUENCE [LARGE SCALE GENOMIC DNA]</scope>
    <source>
        <strain>ATCC 25840 / 63/290 / NCTC 10512</strain>
    </source>
</reference>
<keyword id="KW-0997">Cell inner membrane</keyword>
<keyword id="KW-1003">Cell membrane</keyword>
<keyword id="KW-0186">Copper</keyword>
<keyword id="KW-0472">Membrane</keyword>
<keyword id="KW-0735">Signal-anchor</keyword>
<keyword id="KW-0812">Transmembrane</keyword>
<keyword id="KW-1133">Transmembrane helix</keyword>
<sequence>MTDQGENEKKQRRSNATIAVACLSFFVCMIGAAYASVPLYRIFCQVTGYGGTTQRVEQYSNTILDKTIKVRFDANIANGLPWDFKPMQREVTVRIGETTMIKYEAHNLFGEETYGRASFNVAPGRAGAYFNKVECFCFTDNTLKPGEDLELPVVFFVDPEFVNDPDLKDVKTITLSYTFFPIDKPKPVVNAKAVGSTRNGG</sequence>
<evidence type="ECO:0000255" key="1">
    <source>
        <dbReference type="HAMAP-Rule" id="MF_00155"/>
    </source>
</evidence>
<gene>
    <name evidence="1" type="primary">ctaG</name>
    <name type="ordered locus">BOV_0477</name>
</gene>
<proteinExistence type="inferred from homology"/>
<feature type="chain" id="PRO_0000311199" description="Cytochrome c oxidase assembly protein CtaG">
    <location>
        <begin position="1"/>
        <end position="201"/>
    </location>
</feature>
<feature type="topological domain" description="Cytoplasmic" evidence="1">
    <location>
        <begin position="1"/>
        <end position="13"/>
    </location>
</feature>
<feature type="transmembrane region" description="Helical; Signal-anchor for type II membrane protein" evidence="1">
    <location>
        <begin position="14"/>
        <end position="36"/>
    </location>
</feature>
<feature type="topological domain" description="Periplasmic" evidence="1">
    <location>
        <begin position="37"/>
        <end position="201"/>
    </location>
</feature>
<dbReference type="EMBL" id="CP000708">
    <property type="protein sequence ID" value="ABQ60611.1"/>
    <property type="molecule type" value="Genomic_DNA"/>
</dbReference>
<dbReference type="RefSeq" id="WP_005978409.1">
    <property type="nucleotide sequence ID" value="NC_009505.1"/>
</dbReference>
<dbReference type="SMR" id="A5VP42"/>
<dbReference type="GeneID" id="45123953"/>
<dbReference type="KEGG" id="bov:BOV_0477"/>
<dbReference type="HOGENOM" id="CLU_045000_5_0_5"/>
<dbReference type="PhylomeDB" id="A5VP42"/>
<dbReference type="Proteomes" id="UP000006383">
    <property type="component" value="Chromosome I"/>
</dbReference>
<dbReference type="GO" id="GO:0005886">
    <property type="term" value="C:plasma membrane"/>
    <property type="evidence" value="ECO:0007669"/>
    <property type="project" value="UniProtKB-SubCell"/>
</dbReference>
<dbReference type="GO" id="GO:0005507">
    <property type="term" value="F:copper ion binding"/>
    <property type="evidence" value="ECO:0007669"/>
    <property type="project" value="InterPro"/>
</dbReference>
<dbReference type="GO" id="GO:0008535">
    <property type="term" value="P:respiratory chain complex IV assembly"/>
    <property type="evidence" value="ECO:0007669"/>
    <property type="project" value="UniProtKB-UniRule"/>
</dbReference>
<dbReference type="FunFam" id="2.60.370.10:FF:000001">
    <property type="entry name" value="COX11 cytochrome c oxidase assembly homolog"/>
    <property type="match status" value="1"/>
</dbReference>
<dbReference type="Gene3D" id="2.60.370.10">
    <property type="entry name" value="Ctag/Cox11"/>
    <property type="match status" value="1"/>
</dbReference>
<dbReference type="HAMAP" id="MF_00155">
    <property type="entry name" value="CtaG"/>
    <property type="match status" value="1"/>
</dbReference>
<dbReference type="InterPro" id="IPR023471">
    <property type="entry name" value="CtaG/Cox11_dom_sf"/>
</dbReference>
<dbReference type="InterPro" id="IPR007533">
    <property type="entry name" value="Cyt_c_oxidase_assmbl_CtaG"/>
</dbReference>
<dbReference type="NCBIfam" id="NF003465">
    <property type="entry name" value="PRK05089.1"/>
    <property type="match status" value="1"/>
</dbReference>
<dbReference type="PANTHER" id="PTHR21320:SF3">
    <property type="entry name" value="CYTOCHROME C OXIDASE ASSEMBLY PROTEIN COX11, MITOCHONDRIAL-RELATED"/>
    <property type="match status" value="1"/>
</dbReference>
<dbReference type="PANTHER" id="PTHR21320">
    <property type="entry name" value="CYTOCHROME C OXIDASE ASSEMBLY PROTEIN COX11-RELATED"/>
    <property type="match status" value="1"/>
</dbReference>
<dbReference type="Pfam" id="PF04442">
    <property type="entry name" value="CtaG_Cox11"/>
    <property type="match status" value="1"/>
</dbReference>
<dbReference type="PIRSF" id="PIRSF005413">
    <property type="entry name" value="COX11"/>
    <property type="match status" value="1"/>
</dbReference>
<dbReference type="SUPFAM" id="SSF110111">
    <property type="entry name" value="Ctag/Cox11"/>
    <property type="match status" value="1"/>
</dbReference>
<accession>A5VP42</accession>
<name>COXZ_BRUO2</name>
<protein>
    <recommendedName>
        <fullName evidence="1">Cytochrome c oxidase assembly protein CtaG</fullName>
    </recommendedName>
</protein>
<comment type="function">
    <text evidence="1">Exerts its effect at some terminal stage of cytochrome c oxidase synthesis, probably by being involved in the insertion of the copper B into subunit I.</text>
</comment>
<comment type="subcellular location">
    <subcellularLocation>
        <location evidence="1">Cell inner membrane</location>
        <topology evidence="1">Single-pass type II membrane protein</topology>
        <orientation evidence="1">Periplasmic side</orientation>
    </subcellularLocation>
</comment>
<comment type="similarity">
    <text evidence="1">Belongs to the COX11/CtaG family.</text>
</comment>
<organism>
    <name type="scientific">Brucella ovis (strain ATCC 25840 / 63/290 / NCTC 10512)</name>
    <dbReference type="NCBI Taxonomy" id="444178"/>
    <lineage>
        <taxon>Bacteria</taxon>
        <taxon>Pseudomonadati</taxon>
        <taxon>Pseudomonadota</taxon>
        <taxon>Alphaproteobacteria</taxon>
        <taxon>Hyphomicrobiales</taxon>
        <taxon>Brucellaceae</taxon>
        <taxon>Brucella/Ochrobactrum group</taxon>
        <taxon>Brucella</taxon>
    </lineage>
</organism>